<evidence type="ECO:0000250" key="1">
    <source>
        <dbReference type="UniProtKB" id="Q9D8C2"/>
    </source>
</evidence>
<evidence type="ECO:0000255" key="2"/>
<evidence type="ECO:0000305" key="3"/>
<gene>
    <name type="primary">TSPAN13</name>
</gene>
<accession>Q3ZBV0</accession>
<protein>
    <recommendedName>
        <fullName>Tetraspanin-13</fullName>
        <shortName>Tspan-13</shortName>
    </recommendedName>
</protein>
<comment type="subcellular location">
    <subcellularLocation>
        <location evidence="3">Membrane</location>
        <topology evidence="3">Multi-pass membrane protein</topology>
    </subcellularLocation>
</comment>
<comment type="similarity">
    <text evidence="3">Belongs to the tetraspanin (TM4SF) family.</text>
</comment>
<dbReference type="EMBL" id="BC103095">
    <property type="protein sequence ID" value="AAI03096.1"/>
    <property type="molecule type" value="mRNA"/>
</dbReference>
<dbReference type="RefSeq" id="NP_001030439.1">
    <property type="nucleotide sequence ID" value="NM_001035362.1"/>
</dbReference>
<dbReference type="SMR" id="Q3ZBV0"/>
<dbReference type="FunCoup" id="Q3ZBV0">
    <property type="interactions" value="1746"/>
</dbReference>
<dbReference type="STRING" id="9913.ENSBTAP00000017010"/>
<dbReference type="GlyCosmos" id="Q3ZBV0">
    <property type="glycosylation" value="2 sites, No reported glycans"/>
</dbReference>
<dbReference type="GlyGen" id="Q3ZBV0">
    <property type="glycosylation" value="2 sites"/>
</dbReference>
<dbReference type="PaxDb" id="9913-ENSBTAP00000017010"/>
<dbReference type="GeneID" id="526460"/>
<dbReference type="KEGG" id="bta:526460"/>
<dbReference type="CTD" id="27075"/>
<dbReference type="VEuPathDB" id="HostDB:ENSBTAG00000012805"/>
<dbReference type="eggNOG" id="KOG3882">
    <property type="taxonomic scope" value="Eukaryota"/>
</dbReference>
<dbReference type="HOGENOM" id="CLU_088363_0_0_1"/>
<dbReference type="InParanoid" id="Q3ZBV0"/>
<dbReference type="OMA" id="CPPCAPI"/>
<dbReference type="OrthoDB" id="5845060at2759"/>
<dbReference type="TreeFam" id="TF323367"/>
<dbReference type="Proteomes" id="UP000009136">
    <property type="component" value="Chromosome 4"/>
</dbReference>
<dbReference type="Bgee" id="ENSBTAG00000012805">
    <property type="expression patterns" value="Expressed in occipital lobe and 104 other cell types or tissues"/>
</dbReference>
<dbReference type="GO" id="GO:0016020">
    <property type="term" value="C:membrane"/>
    <property type="evidence" value="ECO:0007669"/>
    <property type="project" value="UniProtKB-SubCell"/>
</dbReference>
<dbReference type="InterPro" id="IPR018499">
    <property type="entry name" value="Tetraspanin/Peripherin"/>
</dbReference>
<dbReference type="InterPro" id="IPR000301">
    <property type="entry name" value="Tetraspanin_animals"/>
</dbReference>
<dbReference type="PANTHER" id="PTHR19282">
    <property type="entry name" value="TETRASPANIN"/>
    <property type="match status" value="1"/>
</dbReference>
<dbReference type="PANTHER" id="PTHR19282:SF203">
    <property type="entry name" value="TETRASPANIN-13"/>
    <property type="match status" value="1"/>
</dbReference>
<dbReference type="Pfam" id="PF00335">
    <property type="entry name" value="Tetraspanin"/>
    <property type="match status" value="1"/>
</dbReference>
<dbReference type="PIRSF" id="PIRSF002419">
    <property type="entry name" value="Tetraspanin"/>
    <property type="match status" value="1"/>
</dbReference>
<dbReference type="PRINTS" id="PR00259">
    <property type="entry name" value="TMFOUR"/>
</dbReference>
<feature type="chain" id="PRO_0000284965" description="Tetraspanin-13">
    <location>
        <begin position="1"/>
        <end position="204"/>
    </location>
</feature>
<feature type="topological domain" description="Cytoplasmic" evidence="2">
    <location>
        <begin position="1"/>
        <end position="19"/>
    </location>
</feature>
<feature type="transmembrane region" description="Helical" evidence="2">
    <location>
        <begin position="20"/>
        <end position="40"/>
    </location>
</feature>
<feature type="topological domain" description="Extracellular" evidence="2">
    <location>
        <begin position="41"/>
        <end position="44"/>
    </location>
</feature>
<feature type="transmembrane region" description="Helical" evidence="2">
    <location>
        <begin position="45"/>
        <end position="65"/>
    </location>
</feature>
<feature type="topological domain" description="Cytoplasmic" evidence="2">
    <location>
        <begin position="66"/>
        <end position="72"/>
    </location>
</feature>
<feature type="transmembrane region" description="Helical" evidence="2">
    <location>
        <begin position="73"/>
        <end position="93"/>
    </location>
</feature>
<feature type="topological domain" description="Extracellular" evidence="2">
    <location>
        <begin position="94"/>
        <end position="167"/>
    </location>
</feature>
<feature type="transmembrane region" description="Helical" evidence="2">
    <location>
        <begin position="168"/>
        <end position="188"/>
    </location>
</feature>
<feature type="topological domain" description="Cytoplasmic" evidence="2">
    <location>
        <begin position="189"/>
        <end position="204"/>
    </location>
</feature>
<feature type="modified residue" description="Phosphoserine" evidence="1">
    <location>
        <position position="143"/>
    </location>
</feature>
<feature type="glycosylation site" description="N-linked (GlcNAc...) asparagine" evidence="2">
    <location>
        <position position="113"/>
    </location>
</feature>
<feature type="glycosylation site" description="N-linked (GlcNAc...) asparagine" evidence="2">
    <location>
        <position position="137"/>
    </location>
</feature>
<name>TSN13_BOVIN</name>
<proteinExistence type="evidence at transcript level"/>
<sequence length="204" mass="22219">MVCGGFACSKNCLCALNLLYTLVSLLLIGIAAWGIGFGLISSLRVVGVVIAVGIFLFLIALVGLIGAVKHHQVLLFFYMIILLLVFIVQFSVSCACLALNQEQQAQLLEVGWNNTASARDDIQRNLNCCGFRSFNPNDTCLASCVKSSHPCSPCAPIIGRYAGEVLRFVGGIGLFFSFTEILGVWLTYRYRNQKDPRANPSAFL</sequence>
<organism>
    <name type="scientific">Bos taurus</name>
    <name type="common">Bovine</name>
    <dbReference type="NCBI Taxonomy" id="9913"/>
    <lineage>
        <taxon>Eukaryota</taxon>
        <taxon>Metazoa</taxon>
        <taxon>Chordata</taxon>
        <taxon>Craniata</taxon>
        <taxon>Vertebrata</taxon>
        <taxon>Euteleostomi</taxon>
        <taxon>Mammalia</taxon>
        <taxon>Eutheria</taxon>
        <taxon>Laurasiatheria</taxon>
        <taxon>Artiodactyla</taxon>
        <taxon>Ruminantia</taxon>
        <taxon>Pecora</taxon>
        <taxon>Bovidae</taxon>
        <taxon>Bovinae</taxon>
        <taxon>Bos</taxon>
    </lineage>
</organism>
<reference key="1">
    <citation type="submission" date="2005-08" db="EMBL/GenBank/DDBJ databases">
        <authorList>
            <consortium name="NIH - Mammalian Gene Collection (MGC) project"/>
        </authorList>
    </citation>
    <scope>NUCLEOTIDE SEQUENCE [LARGE SCALE MRNA]</scope>
    <source>
        <strain>Crossbred X Angus</strain>
        <tissue>Ileum</tissue>
    </source>
</reference>
<keyword id="KW-0325">Glycoprotein</keyword>
<keyword id="KW-0472">Membrane</keyword>
<keyword id="KW-0597">Phosphoprotein</keyword>
<keyword id="KW-1185">Reference proteome</keyword>
<keyword id="KW-0812">Transmembrane</keyword>
<keyword id="KW-1133">Transmembrane helix</keyword>